<comment type="cofactor">
    <cofactor evidence="1">
        <name>Zn(2+)</name>
        <dbReference type="ChEBI" id="CHEBI:29105"/>
    </cofactor>
    <text evidence="1">Binds 1 zinc ion per subunit.</text>
</comment>
<comment type="subcellular location">
    <subcellularLocation>
        <location evidence="1">Cell inner membrane</location>
        <topology evidence="1">Multi-pass membrane protein</topology>
    </subcellularLocation>
</comment>
<comment type="similarity">
    <text evidence="1">Belongs to the peptidase M48B family.</text>
</comment>
<evidence type="ECO:0000255" key="1">
    <source>
        <dbReference type="HAMAP-Rule" id="MF_00188"/>
    </source>
</evidence>
<evidence type="ECO:0000256" key="2">
    <source>
        <dbReference type="SAM" id="MobiDB-lite"/>
    </source>
</evidence>
<reference key="1">
    <citation type="journal article" date="2008" name="PLoS ONE">
        <title>Genome sequence of Brucella abortus vaccine strain S19 compared to virulent strains yields candidate virulence genes.</title>
        <authorList>
            <person name="Crasta O.R."/>
            <person name="Folkerts O."/>
            <person name="Fei Z."/>
            <person name="Mane S.P."/>
            <person name="Evans C."/>
            <person name="Martino-Catt S."/>
            <person name="Bricker B."/>
            <person name="Yu G."/>
            <person name="Du L."/>
            <person name="Sobral B.W."/>
        </authorList>
    </citation>
    <scope>NUCLEOTIDE SEQUENCE [LARGE SCALE GENOMIC DNA]</scope>
    <source>
        <strain>S19</strain>
    </source>
</reference>
<name>HTPX_BRUA1</name>
<feature type="chain" id="PRO_1000098806" description="Protease HtpX homolog">
    <location>
        <begin position="1"/>
        <end position="325"/>
    </location>
</feature>
<feature type="transmembrane region" description="Helical" evidence="1">
    <location>
        <begin position="20"/>
        <end position="40"/>
    </location>
</feature>
<feature type="transmembrane region" description="Helical" evidence="1">
    <location>
        <begin position="145"/>
        <end position="165"/>
    </location>
</feature>
<feature type="transmembrane region" description="Helical" evidence="1">
    <location>
        <begin position="173"/>
        <end position="193"/>
    </location>
</feature>
<feature type="region of interest" description="Disordered" evidence="2">
    <location>
        <begin position="288"/>
        <end position="325"/>
    </location>
</feature>
<feature type="compositionally biased region" description="Low complexity" evidence="2">
    <location>
        <begin position="306"/>
        <end position="325"/>
    </location>
</feature>
<feature type="active site" evidence="1">
    <location>
        <position position="131"/>
    </location>
</feature>
<feature type="binding site" evidence="1">
    <location>
        <position position="130"/>
    </location>
    <ligand>
        <name>Zn(2+)</name>
        <dbReference type="ChEBI" id="CHEBI:29105"/>
        <note>catalytic</note>
    </ligand>
</feature>
<feature type="binding site" evidence="1">
    <location>
        <position position="134"/>
    </location>
    <ligand>
        <name>Zn(2+)</name>
        <dbReference type="ChEBI" id="CHEBI:29105"/>
        <note>catalytic</note>
    </ligand>
</feature>
<feature type="binding site" evidence="1">
    <location>
        <position position="202"/>
    </location>
    <ligand>
        <name>Zn(2+)</name>
        <dbReference type="ChEBI" id="CHEBI:29105"/>
        <note>catalytic</note>
    </ligand>
</feature>
<organism>
    <name type="scientific">Brucella abortus (strain S19)</name>
    <dbReference type="NCBI Taxonomy" id="430066"/>
    <lineage>
        <taxon>Bacteria</taxon>
        <taxon>Pseudomonadati</taxon>
        <taxon>Pseudomonadota</taxon>
        <taxon>Alphaproteobacteria</taxon>
        <taxon>Hyphomicrobiales</taxon>
        <taxon>Brucellaceae</taxon>
        <taxon>Brucella/Ochrobactrum group</taxon>
        <taxon>Brucella</taxon>
    </lineage>
</organism>
<proteinExistence type="inferred from homology"/>
<dbReference type="EC" id="3.4.24.-" evidence="1"/>
<dbReference type="EMBL" id="CP000887">
    <property type="protein sequence ID" value="ACD73184.1"/>
    <property type="molecule type" value="Genomic_DNA"/>
</dbReference>
<dbReference type="RefSeq" id="WP_002964890.1">
    <property type="nucleotide sequence ID" value="NC_010742.1"/>
</dbReference>
<dbReference type="GeneID" id="93017847"/>
<dbReference type="KEGG" id="bmc:BAbS19_I17020"/>
<dbReference type="HOGENOM" id="CLU_042266_3_0_5"/>
<dbReference type="Proteomes" id="UP000002565">
    <property type="component" value="Chromosome 1"/>
</dbReference>
<dbReference type="GO" id="GO:0005886">
    <property type="term" value="C:plasma membrane"/>
    <property type="evidence" value="ECO:0007669"/>
    <property type="project" value="UniProtKB-SubCell"/>
</dbReference>
<dbReference type="GO" id="GO:0004222">
    <property type="term" value="F:metalloendopeptidase activity"/>
    <property type="evidence" value="ECO:0007669"/>
    <property type="project" value="UniProtKB-UniRule"/>
</dbReference>
<dbReference type="GO" id="GO:0008270">
    <property type="term" value="F:zinc ion binding"/>
    <property type="evidence" value="ECO:0007669"/>
    <property type="project" value="UniProtKB-UniRule"/>
</dbReference>
<dbReference type="GO" id="GO:0006508">
    <property type="term" value="P:proteolysis"/>
    <property type="evidence" value="ECO:0007669"/>
    <property type="project" value="UniProtKB-KW"/>
</dbReference>
<dbReference type="CDD" id="cd07336">
    <property type="entry name" value="M48B_HtpX_like"/>
    <property type="match status" value="1"/>
</dbReference>
<dbReference type="Gene3D" id="3.30.2010.10">
    <property type="entry name" value="Metalloproteases ('zincins'), catalytic domain"/>
    <property type="match status" value="1"/>
</dbReference>
<dbReference type="HAMAP" id="MF_00188">
    <property type="entry name" value="Pept_M48_protease_HtpX"/>
    <property type="match status" value="1"/>
</dbReference>
<dbReference type="InterPro" id="IPR050083">
    <property type="entry name" value="HtpX_protease"/>
</dbReference>
<dbReference type="InterPro" id="IPR022919">
    <property type="entry name" value="Pept_M48_protease_HtpX"/>
</dbReference>
<dbReference type="InterPro" id="IPR001915">
    <property type="entry name" value="Peptidase_M48"/>
</dbReference>
<dbReference type="NCBIfam" id="NF002363">
    <property type="entry name" value="PRK01345.1"/>
    <property type="match status" value="1"/>
</dbReference>
<dbReference type="NCBIfam" id="NF002826">
    <property type="entry name" value="PRK03001.1"/>
    <property type="match status" value="1"/>
</dbReference>
<dbReference type="PANTHER" id="PTHR43221">
    <property type="entry name" value="PROTEASE HTPX"/>
    <property type="match status" value="1"/>
</dbReference>
<dbReference type="PANTHER" id="PTHR43221:SF1">
    <property type="entry name" value="PROTEASE HTPX"/>
    <property type="match status" value="1"/>
</dbReference>
<dbReference type="Pfam" id="PF01435">
    <property type="entry name" value="Peptidase_M48"/>
    <property type="match status" value="1"/>
</dbReference>
<dbReference type="PROSITE" id="PS00142">
    <property type="entry name" value="ZINC_PROTEASE"/>
    <property type="match status" value="1"/>
</dbReference>
<gene>
    <name evidence="1" type="primary">htpX</name>
    <name type="ordered locus">BAbS19_I17020</name>
</gene>
<keyword id="KW-0997">Cell inner membrane</keyword>
<keyword id="KW-1003">Cell membrane</keyword>
<keyword id="KW-0378">Hydrolase</keyword>
<keyword id="KW-0472">Membrane</keyword>
<keyword id="KW-0479">Metal-binding</keyword>
<keyword id="KW-0482">Metalloprotease</keyword>
<keyword id="KW-0645">Protease</keyword>
<keyword id="KW-0812">Transmembrane</keyword>
<keyword id="KW-1133">Transmembrane helix</keyword>
<keyword id="KW-0862">Zinc</keyword>
<accession>B2S7N7</accession>
<sequence length="325" mass="34500">MNMTKTAMLIALMTVMFMSIGYLLGGGGGMMIALVIAVAMNLFGYWNSDKMVLRMYNAQEVDERSAPEYYRMVSGLAANAGLPMPKVYIIHEDQPNAFATGRNPENAAVAATTGLLNRLSPEEVAGVMAHELAHVQNRDTLTMTIVATLAGAISMLGNFAFFLGGNRENGNGVMGVVGTLLAMIVAPFGAMIVQMAVSRTREYAADKRGAEICGNPLWLSSALGRIARGAKVIPNEEAEHNPATAHMFIINPLSGRGADNLFSTHPDTDNRIAALEQMAAEMGIRSAAMTARAAAPSQNSGPWGQRSDNAGGNSNGGSRYRGPWS</sequence>
<protein>
    <recommendedName>
        <fullName evidence="1">Protease HtpX homolog</fullName>
        <ecNumber evidence="1">3.4.24.-</ecNumber>
    </recommendedName>
</protein>